<evidence type="ECO:0000255" key="1">
    <source>
        <dbReference type="HAMAP-Rule" id="MF_00176"/>
    </source>
</evidence>
<accession>Q6G419</accession>
<gene>
    <name evidence="1" type="primary">serS</name>
    <name type="ordered locus">BH05610</name>
</gene>
<name>SYS_BARHE</name>
<comment type="function">
    <text evidence="1">Catalyzes the attachment of serine to tRNA(Ser). Is also able to aminoacylate tRNA(Sec) with serine, to form the misacylated tRNA L-seryl-tRNA(Sec), which will be further converted into selenocysteinyl-tRNA(Sec).</text>
</comment>
<comment type="catalytic activity">
    <reaction evidence="1">
        <text>tRNA(Ser) + L-serine + ATP = L-seryl-tRNA(Ser) + AMP + diphosphate + H(+)</text>
        <dbReference type="Rhea" id="RHEA:12292"/>
        <dbReference type="Rhea" id="RHEA-COMP:9669"/>
        <dbReference type="Rhea" id="RHEA-COMP:9703"/>
        <dbReference type="ChEBI" id="CHEBI:15378"/>
        <dbReference type="ChEBI" id="CHEBI:30616"/>
        <dbReference type="ChEBI" id="CHEBI:33019"/>
        <dbReference type="ChEBI" id="CHEBI:33384"/>
        <dbReference type="ChEBI" id="CHEBI:78442"/>
        <dbReference type="ChEBI" id="CHEBI:78533"/>
        <dbReference type="ChEBI" id="CHEBI:456215"/>
        <dbReference type="EC" id="6.1.1.11"/>
    </reaction>
</comment>
<comment type="catalytic activity">
    <reaction evidence="1">
        <text>tRNA(Sec) + L-serine + ATP = L-seryl-tRNA(Sec) + AMP + diphosphate + H(+)</text>
        <dbReference type="Rhea" id="RHEA:42580"/>
        <dbReference type="Rhea" id="RHEA-COMP:9742"/>
        <dbReference type="Rhea" id="RHEA-COMP:10128"/>
        <dbReference type="ChEBI" id="CHEBI:15378"/>
        <dbReference type="ChEBI" id="CHEBI:30616"/>
        <dbReference type="ChEBI" id="CHEBI:33019"/>
        <dbReference type="ChEBI" id="CHEBI:33384"/>
        <dbReference type="ChEBI" id="CHEBI:78442"/>
        <dbReference type="ChEBI" id="CHEBI:78533"/>
        <dbReference type="ChEBI" id="CHEBI:456215"/>
        <dbReference type="EC" id="6.1.1.11"/>
    </reaction>
</comment>
<comment type="pathway">
    <text evidence="1">Aminoacyl-tRNA biosynthesis; selenocysteinyl-tRNA(Sec) biosynthesis; L-seryl-tRNA(Sec) from L-serine and tRNA(Sec): step 1/1.</text>
</comment>
<comment type="subunit">
    <text evidence="1">Homodimer. The tRNA molecule binds across the dimer.</text>
</comment>
<comment type="subcellular location">
    <subcellularLocation>
        <location evidence="1">Cytoplasm</location>
    </subcellularLocation>
</comment>
<comment type="domain">
    <text evidence="1">Consists of two distinct domains, a catalytic core and a N-terminal extension that is involved in tRNA binding.</text>
</comment>
<comment type="similarity">
    <text evidence="1">Belongs to the class-II aminoacyl-tRNA synthetase family. Type-1 seryl-tRNA synthetase subfamily.</text>
</comment>
<feature type="chain" id="PRO_0000122006" description="Serine--tRNA ligase">
    <location>
        <begin position="1"/>
        <end position="425"/>
    </location>
</feature>
<feature type="binding site" evidence="1">
    <location>
        <begin position="231"/>
        <end position="233"/>
    </location>
    <ligand>
        <name>L-serine</name>
        <dbReference type="ChEBI" id="CHEBI:33384"/>
    </ligand>
</feature>
<feature type="binding site" evidence="1">
    <location>
        <begin position="262"/>
        <end position="264"/>
    </location>
    <ligand>
        <name>ATP</name>
        <dbReference type="ChEBI" id="CHEBI:30616"/>
    </ligand>
</feature>
<feature type="binding site" evidence="1">
    <location>
        <position position="285"/>
    </location>
    <ligand>
        <name>L-serine</name>
        <dbReference type="ChEBI" id="CHEBI:33384"/>
    </ligand>
</feature>
<feature type="binding site" evidence="1">
    <location>
        <begin position="349"/>
        <end position="352"/>
    </location>
    <ligand>
        <name>ATP</name>
        <dbReference type="ChEBI" id="CHEBI:30616"/>
    </ligand>
</feature>
<feature type="binding site" evidence="1">
    <location>
        <position position="385"/>
    </location>
    <ligand>
        <name>L-serine</name>
        <dbReference type="ChEBI" id="CHEBI:33384"/>
    </ligand>
</feature>
<organism>
    <name type="scientific">Bartonella henselae (strain ATCC 49882 / DSM 28221 / CCUG 30454 / Houston 1)</name>
    <name type="common">Rochalimaea henselae</name>
    <dbReference type="NCBI Taxonomy" id="283166"/>
    <lineage>
        <taxon>Bacteria</taxon>
        <taxon>Pseudomonadati</taxon>
        <taxon>Pseudomonadota</taxon>
        <taxon>Alphaproteobacteria</taxon>
        <taxon>Hyphomicrobiales</taxon>
        <taxon>Bartonellaceae</taxon>
        <taxon>Bartonella</taxon>
    </lineage>
</organism>
<protein>
    <recommendedName>
        <fullName evidence="1">Serine--tRNA ligase</fullName>
        <ecNumber evidence="1">6.1.1.11</ecNumber>
    </recommendedName>
    <alternativeName>
        <fullName evidence="1">Seryl-tRNA synthetase</fullName>
        <shortName evidence="1">SerRS</shortName>
    </alternativeName>
    <alternativeName>
        <fullName evidence="1">Seryl-tRNA(Ser/Sec) synthetase</fullName>
    </alternativeName>
</protein>
<keyword id="KW-0030">Aminoacyl-tRNA synthetase</keyword>
<keyword id="KW-0067">ATP-binding</keyword>
<keyword id="KW-0963">Cytoplasm</keyword>
<keyword id="KW-0436">Ligase</keyword>
<keyword id="KW-0547">Nucleotide-binding</keyword>
<keyword id="KW-0648">Protein biosynthesis</keyword>
<sequence>MLDIKWIREHPEKLDEALAKRGIEPQAERLIKLDLERRSHVAKVQSAQERRNTASKKIGQALAVCDQKMAERFRAEVEEIKVFLSSATAEEKRLTESLENALSALPNIPLDDVPEGKDESDNVVLRHFSVPTTFDFTPKEHFDLGQNLKQMDFERASRLSGTRFTVLSGALARLERALGQFMLDVHVYEHGYTEVSVPLLVRDESVYGAAQLPKFADDLFRTTDGRWLISTAEVPLTNLVNNEILEISDLPLRFSSLTPCFRSEAGSAGRDTRGMLRQHQFWKVEMVSITTAEQSLIELERMTECAEDVLKRLDLPFRTMVLSTGDMGFAARKTYDIEVWLPGQGCYREISSCSVCGDFQGRRMNARYRKEGEKTLHFVHSLNGSGTAVGRCLIAVLENYQQADGSIIIPDVLQPYMRGMRCITA</sequence>
<dbReference type="EC" id="6.1.1.11" evidence="1"/>
<dbReference type="EMBL" id="BX897699">
    <property type="protein sequence ID" value="CAF27369.1"/>
    <property type="molecule type" value="Genomic_DNA"/>
</dbReference>
<dbReference type="RefSeq" id="WP_011180490.1">
    <property type="nucleotide sequence ID" value="NZ_LRIJ02000001.1"/>
</dbReference>
<dbReference type="SMR" id="Q6G419"/>
<dbReference type="PaxDb" id="283166-BH05610"/>
<dbReference type="EnsemblBacteria" id="CAF27369">
    <property type="protein sequence ID" value="CAF27369"/>
    <property type="gene ID" value="BH05610"/>
</dbReference>
<dbReference type="GeneID" id="92985220"/>
<dbReference type="KEGG" id="bhe:BH05610"/>
<dbReference type="eggNOG" id="COG0172">
    <property type="taxonomic scope" value="Bacteria"/>
</dbReference>
<dbReference type="OrthoDB" id="9804647at2"/>
<dbReference type="UniPathway" id="UPA00906">
    <property type="reaction ID" value="UER00895"/>
</dbReference>
<dbReference type="Proteomes" id="UP000000421">
    <property type="component" value="Chromosome"/>
</dbReference>
<dbReference type="GO" id="GO:0005737">
    <property type="term" value="C:cytoplasm"/>
    <property type="evidence" value="ECO:0007669"/>
    <property type="project" value="UniProtKB-SubCell"/>
</dbReference>
<dbReference type="GO" id="GO:0005524">
    <property type="term" value="F:ATP binding"/>
    <property type="evidence" value="ECO:0007669"/>
    <property type="project" value="UniProtKB-UniRule"/>
</dbReference>
<dbReference type="GO" id="GO:0004828">
    <property type="term" value="F:serine-tRNA ligase activity"/>
    <property type="evidence" value="ECO:0007669"/>
    <property type="project" value="UniProtKB-UniRule"/>
</dbReference>
<dbReference type="GO" id="GO:0016260">
    <property type="term" value="P:selenocysteine biosynthetic process"/>
    <property type="evidence" value="ECO:0007669"/>
    <property type="project" value="UniProtKB-UniRule"/>
</dbReference>
<dbReference type="GO" id="GO:0006434">
    <property type="term" value="P:seryl-tRNA aminoacylation"/>
    <property type="evidence" value="ECO:0007669"/>
    <property type="project" value="UniProtKB-UniRule"/>
</dbReference>
<dbReference type="CDD" id="cd00770">
    <property type="entry name" value="SerRS_core"/>
    <property type="match status" value="1"/>
</dbReference>
<dbReference type="Gene3D" id="3.30.930.10">
    <property type="entry name" value="Bira Bifunctional Protein, Domain 2"/>
    <property type="match status" value="1"/>
</dbReference>
<dbReference type="Gene3D" id="1.10.287.40">
    <property type="entry name" value="Serine-tRNA synthetase, tRNA binding domain"/>
    <property type="match status" value="1"/>
</dbReference>
<dbReference type="HAMAP" id="MF_00176">
    <property type="entry name" value="Ser_tRNA_synth_type1"/>
    <property type="match status" value="1"/>
</dbReference>
<dbReference type="InterPro" id="IPR002314">
    <property type="entry name" value="aa-tRNA-synt_IIb"/>
</dbReference>
<dbReference type="InterPro" id="IPR006195">
    <property type="entry name" value="aa-tRNA-synth_II"/>
</dbReference>
<dbReference type="InterPro" id="IPR045864">
    <property type="entry name" value="aa-tRNA-synth_II/BPL/LPL"/>
</dbReference>
<dbReference type="InterPro" id="IPR002317">
    <property type="entry name" value="Ser-tRNA-ligase_type_1"/>
</dbReference>
<dbReference type="InterPro" id="IPR015866">
    <property type="entry name" value="Ser-tRNA-synth_1_N"/>
</dbReference>
<dbReference type="InterPro" id="IPR042103">
    <property type="entry name" value="SerRS_1_N_sf"/>
</dbReference>
<dbReference type="InterPro" id="IPR033729">
    <property type="entry name" value="SerRS_core"/>
</dbReference>
<dbReference type="InterPro" id="IPR010978">
    <property type="entry name" value="tRNA-bd_arm"/>
</dbReference>
<dbReference type="NCBIfam" id="TIGR00414">
    <property type="entry name" value="serS"/>
    <property type="match status" value="1"/>
</dbReference>
<dbReference type="PANTHER" id="PTHR43697:SF1">
    <property type="entry name" value="SERINE--TRNA LIGASE"/>
    <property type="match status" value="1"/>
</dbReference>
<dbReference type="PANTHER" id="PTHR43697">
    <property type="entry name" value="SERYL-TRNA SYNTHETASE"/>
    <property type="match status" value="1"/>
</dbReference>
<dbReference type="Pfam" id="PF02403">
    <property type="entry name" value="Seryl_tRNA_N"/>
    <property type="match status" value="1"/>
</dbReference>
<dbReference type="Pfam" id="PF00587">
    <property type="entry name" value="tRNA-synt_2b"/>
    <property type="match status" value="1"/>
</dbReference>
<dbReference type="PIRSF" id="PIRSF001529">
    <property type="entry name" value="Ser-tRNA-synth_IIa"/>
    <property type="match status" value="1"/>
</dbReference>
<dbReference type="PRINTS" id="PR00981">
    <property type="entry name" value="TRNASYNTHSER"/>
</dbReference>
<dbReference type="SUPFAM" id="SSF55681">
    <property type="entry name" value="Class II aaRS and biotin synthetases"/>
    <property type="match status" value="1"/>
</dbReference>
<dbReference type="SUPFAM" id="SSF46589">
    <property type="entry name" value="tRNA-binding arm"/>
    <property type="match status" value="1"/>
</dbReference>
<dbReference type="PROSITE" id="PS50862">
    <property type="entry name" value="AA_TRNA_LIGASE_II"/>
    <property type="match status" value="1"/>
</dbReference>
<proteinExistence type="inferred from homology"/>
<reference key="1">
    <citation type="journal article" date="2004" name="Proc. Natl. Acad. Sci. U.S.A.">
        <title>The louse-borne human pathogen Bartonella quintana is a genomic derivative of the zoonotic agent Bartonella henselae.</title>
        <authorList>
            <person name="Alsmark U.C.M."/>
            <person name="Frank A.C."/>
            <person name="Karlberg E.O."/>
            <person name="Legault B.-A."/>
            <person name="Ardell D.H."/>
            <person name="Canbaeck B."/>
            <person name="Eriksson A.-S."/>
            <person name="Naeslund A.K."/>
            <person name="Handley S.A."/>
            <person name="Huvet M."/>
            <person name="La Scola B."/>
            <person name="Holmberg M."/>
            <person name="Andersson S.G.E."/>
        </authorList>
    </citation>
    <scope>NUCLEOTIDE SEQUENCE [LARGE SCALE GENOMIC DNA]</scope>
    <source>
        <strain>ATCC 49882 / DSM 28221 / CCUG 30454 / Houston 1</strain>
    </source>
</reference>